<accession>P37303</accession>
<accession>D3DLK4</accession>
<accession>P32615</accession>
<proteinExistence type="evidence at protein level"/>
<evidence type="ECO:0000250" key="1"/>
<evidence type="ECO:0000269" key="2">
    <source>
    </source>
</evidence>
<evidence type="ECO:0000269" key="3">
    <source>
    </source>
</evidence>
<evidence type="ECO:0000305" key="4"/>
<evidence type="ECO:0007744" key="5">
    <source>
    </source>
</evidence>
<evidence type="ECO:0007744" key="6">
    <source>
    </source>
</evidence>
<organism>
    <name type="scientific">Saccharomyces cerevisiae (strain ATCC 204508 / S288c)</name>
    <name type="common">Baker's yeast</name>
    <dbReference type="NCBI Taxonomy" id="559292"/>
    <lineage>
        <taxon>Eukaryota</taxon>
        <taxon>Fungi</taxon>
        <taxon>Dikarya</taxon>
        <taxon>Ascomycota</taxon>
        <taxon>Saccharomycotina</taxon>
        <taxon>Saccharomycetes</taxon>
        <taxon>Saccharomycetales</taxon>
        <taxon>Saccharomycetaceae</taxon>
        <taxon>Saccharomyces</taxon>
    </lineage>
</organism>
<reference key="1">
    <citation type="journal article" date="1994" name="J. Biol. Chem.">
        <title>Cloning and molecular characterization of three genes, including two genes encoding serine hydroxymethyltransferases, whose inactivation is required to render yeast auxotrophic for glycine.</title>
        <authorList>
            <person name="McNeil J.B."/>
            <person name="McIntosh E.M."/>
            <person name="Taylor B.V."/>
            <person name="Zhang F.-R."/>
            <person name="Tang S."/>
            <person name="Bognar A.L."/>
        </authorList>
    </citation>
    <scope>NUCLEOTIDE SEQUENCE [GENOMIC DNA]</scope>
    <source>
        <strain>ATCC 201238 / W303-1B</strain>
    </source>
</reference>
<reference key="2">
    <citation type="journal article" date="1997" name="Nature">
        <title>The nucleotide sequence of Saccharomyces cerevisiae chromosome V.</title>
        <authorList>
            <person name="Dietrich F.S."/>
            <person name="Mulligan J.T."/>
            <person name="Hennessy K.M."/>
            <person name="Yelton M.A."/>
            <person name="Allen E."/>
            <person name="Araujo R."/>
            <person name="Aviles E."/>
            <person name="Berno A."/>
            <person name="Brennan T."/>
            <person name="Carpenter J."/>
            <person name="Chen E."/>
            <person name="Cherry J.M."/>
            <person name="Chung E."/>
            <person name="Duncan M."/>
            <person name="Guzman E."/>
            <person name="Hartzell G."/>
            <person name="Hunicke-Smith S."/>
            <person name="Hyman R.W."/>
            <person name="Kayser A."/>
            <person name="Komp C."/>
            <person name="Lashkari D."/>
            <person name="Lew H."/>
            <person name="Lin D."/>
            <person name="Mosedale D."/>
            <person name="Nakahara K."/>
            <person name="Namath A."/>
            <person name="Norgren R."/>
            <person name="Oefner P."/>
            <person name="Oh C."/>
            <person name="Petel F.X."/>
            <person name="Roberts D."/>
            <person name="Sehl P."/>
            <person name="Schramm S."/>
            <person name="Shogren T."/>
            <person name="Smith V."/>
            <person name="Taylor P."/>
            <person name="Wei Y."/>
            <person name="Botstein D."/>
            <person name="Davis R.W."/>
        </authorList>
    </citation>
    <scope>NUCLEOTIDE SEQUENCE [LARGE SCALE GENOMIC DNA]</scope>
    <source>
        <strain>ATCC 204508 / S288c</strain>
    </source>
</reference>
<reference key="3">
    <citation type="journal article" date="2014" name="G3 (Bethesda)">
        <title>The reference genome sequence of Saccharomyces cerevisiae: Then and now.</title>
        <authorList>
            <person name="Engel S.R."/>
            <person name="Dietrich F.S."/>
            <person name="Fisk D.G."/>
            <person name="Binkley G."/>
            <person name="Balakrishnan R."/>
            <person name="Costanzo M.C."/>
            <person name="Dwight S.S."/>
            <person name="Hitz B.C."/>
            <person name="Karra K."/>
            <person name="Nash R.S."/>
            <person name="Weng S."/>
            <person name="Wong E.D."/>
            <person name="Lloyd P."/>
            <person name="Skrzypek M.S."/>
            <person name="Miyasato S.R."/>
            <person name="Simison M."/>
            <person name="Cherry J.M."/>
        </authorList>
    </citation>
    <scope>GENOME REANNOTATION</scope>
    <source>
        <strain>ATCC 204508 / S288c</strain>
    </source>
</reference>
<reference key="4">
    <citation type="journal article" date="1997" name="Eur. J. Biochem.">
        <title>The GLY1 gene of Saccharomyces cerevisiae encodes a low-specific L-threonine aldolase that catalyzes cleavage of L-allo-threonine and L-threonine to glycine -- expression of the gene in Escherichia coli and purification and characterization of the enzyme.</title>
        <authorList>
            <person name="Liu J.-Q."/>
            <person name="Nagata S."/>
            <person name="Dairi T."/>
            <person name="Misono H."/>
            <person name="Shimizu S."/>
            <person name="Yamada H."/>
        </authorList>
    </citation>
    <scope>CATALYTIC ACTIVITY</scope>
    <scope>CHARACTERIZATION</scope>
</reference>
<reference key="5">
    <citation type="journal article" date="1997" name="FEMS Microbiol. Lett.">
        <title>Identification of Saccharomyces cerevisiae GLY1 as a threonine aldolase: a key enzyme in glycine biosynthesis.</title>
        <authorList>
            <person name="Monschau N."/>
            <person name="Stahmann K.-P."/>
            <person name="Sahm H."/>
            <person name="McNeil J.B."/>
            <person name="Bognar A.L."/>
        </authorList>
    </citation>
    <scope>CHARACTERIZATION</scope>
</reference>
<reference key="6">
    <citation type="journal article" date="2003" name="Nature">
        <title>Global analysis of protein expression in yeast.</title>
        <authorList>
            <person name="Ghaemmaghami S."/>
            <person name="Huh W.-K."/>
            <person name="Bower K."/>
            <person name="Howson R.W."/>
            <person name="Belle A."/>
            <person name="Dephoure N."/>
            <person name="O'Shea E.K."/>
            <person name="Weissman J.S."/>
        </authorList>
    </citation>
    <scope>LEVEL OF PROTEIN EXPRESSION [LARGE SCALE ANALYSIS]</scope>
</reference>
<reference key="7">
    <citation type="journal article" date="2003" name="Nat. Biotechnol.">
        <title>A proteomics approach to understanding protein ubiquitination.</title>
        <authorList>
            <person name="Peng J."/>
            <person name="Schwartz D."/>
            <person name="Elias J.E."/>
            <person name="Thoreen C.C."/>
            <person name="Cheng D."/>
            <person name="Marsischky G."/>
            <person name="Roelofs J."/>
            <person name="Finley D."/>
            <person name="Gygi S.P."/>
        </authorList>
    </citation>
    <scope>UBIQUITINATION [LARGE SCALE ANALYSIS] AT LYS-228</scope>
    <scope>IDENTIFICATION BY MASS SPECTROMETRY</scope>
    <source>
        <strain>SUB592</strain>
    </source>
</reference>
<reference key="8">
    <citation type="journal article" date="2003" name="Proc. Natl. Acad. Sci. U.S.A.">
        <title>A subset of membrane-associated proteins is ubiquitinated in response to mutations in the endoplasmic reticulum degradation machinery.</title>
        <authorList>
            <person name="Hitchcock A.L."/>
            <person name="Auld K."/>
            <person name="Gygi S.P."/>
            <person name="Silver P.A."/>
        </authorList>
    </citation>
    <scope>UBIQUITINATION [LARGE SCALE ANALYSIS] AT LYS-228</scope>
    <scope>IDENTIFICATION BY MASS SPECTROMETRY</scope>
</reference>
<reference key="9">
    <citation type="journal article" date="2005" name="Mol. Cell. Proteomics">
        <title>Quantitative phosphoproteomics applied to the yeast pheromone signaling pathway.</title>
        <authorList>
            <person name="Gruhler A."/>
            <person name="Olsen J.V."/>
            <person name="Mohammed S."/>
            <person name="Mortensen P."/>
            <person name="Faergeman N.J."/>
            <person name="Mann M."/>
            <person name="Jensen O.N."/>
        </authorList>
    </citation>
    <scope>IDENTIFICATION BY MASS SPECTROMETRY [LARGE SCALE ANALYSIS]</scope>
    <source>
        <strain>YAL6B</strain>
    </source>
</reference>
<reference key="10">
    <citation type="journal article" date="2007" name="J. Proteome Res.">
        <title>Large-scale phosphorylation analysis of alpha-factor-arrested Saccharomyces cerevisiae.</title>
        <authorList>
            <person name="Li X."/>
            <person name="Gerber S.A."/>
            <person name="Rudner A.D."/>
            <person name="Beausoleil S.A."/>
            <person name="Haas W."/>
            <person name="Villen J."/>
            <person name="Elias J.E."/>
            <person name="Gygi S.P."/>
        </authorList>
    </citation>
    <scope>IDENTIFICATION BY MASS SPECTROMETRY [LARGE SCALE ANALYSIS]</scope>
    <source>
        <strain>ADR376</strain>
    </source>
</reference>
<reference key="11">
    <citation type="journal article" date="2008" name="Mol. Cell. Proteomics">
        <title>A multidimensional chromatography technology for in-depth phosphoproteome analysis.</title>
        <authorList>
            <person name="Albuquerque C.P."/>
            <person name="Smolka M.B."/>
            <person name="Payne S.H."/>
            <person name="Bafna V."/>
            <person name="Eng J."/>
            <person name="Zhou H."/>
        </authorList>
    </citation>
    <scope>IDENTIFICATION BY MASS SPECTROMETRY [LARGE SCALE ANALYSIS]</scope>
</reference>
<reference key="12">
    <citation type="journal article" date="2009" name="Science">
        <title>Global analysis of Cdk1 substrate phosphorylation sites provides insights into evolution.</title>
        <authorList>
            <person name="Holt L.J."/>
            <person name="Tuch B.B."/>
            <person name="Villen J."/>
            <person name="Johnson A.D."/>
            <person name="Gygi S.P."/>
            <person name="Morgan D.O."/>
        </authorList>
    </citation>
    <scope>PHOSPHORYLATION [LARGE SCALE ANALYSIS] AT SER-367; SER-369 AND THR-370</scope>
    <scope>IDENTIFICATION BY MASS SPECTROMETRY [LARGE SCALE ANALYSIS]</scope>
</reference>
<reference key="13">
    <citation type="journal article" date="2012" name="Proc. Natl. Acad. Sci. U.S.A.">
        <title>N-terminal acetylome analyses and functional insights of the N-terminal acetyltransferase NatB.</title>
        <authorList>
            <person name="Van Damme P."/>
            <person name="Lasa M."/>
            <person name="Polevoda B."/>
            <person name="Gazquez C."/>
            <person name="Elosegui-Artola A."/>
            <person name="Kim D.S."/>
            <person name="De Juan-Pardo E."/>
            <person name="Demeyer K."/>
            <person name="Hole K."/>
            <person name="Larrea E."/>
            <person name="Timmerman E."/>
            <person name="Prieto J."/>
            <person name="Arnesen T."/>
            <person name="Sherman F."/>
            <person name="Gevaert K."/>
            <person name="Aldabe R."/>
        </authorList>
    </citation>
    <scope>IDENTIFICATION BY MASS SPECTROMETRY [LARGE SCALE ANALYSIS]</scope>
</reference>
<reference key="14">
    <citation type="journal article" date="2012" name="Proteomics">
        <title>Sites of ubiquitin attachment in Saccharomyces cerevisiae.</title>
        <authorList>
            <person name="Starita L.M."/>
            <person name="Lo R.S."/>
            <person name="Eng J.K."/>
            <person name="von Haller P.D."/>
            <person name="Fields S."/>
        </authorList>
    </citation>
    <scope>UBIQUITINATION [LARGE SCALE ANALYSIS] AT LYS-228</scope>
    <scope>IDENTIFICATION BY MASS SPECTROMETRY [LARGE SCALE ANALYSIS]</scope>
</reference>
<name>GLY1_YEAST</name>
<feature type="chain" id="PRO_0000121572" description="Low specificity L-threonine aldolase">
    <location>
        <begin position="1"/>
        <end position="387"/>
    </location>
</feature>
<feature type="modified residue" description="N6-(pyridoxal phosphate)lysine" evidence="1">
    <location>
        <position position="213"/>
    </location>
</feature>
<feature type="modified residue" description="Phosphoserine" evidence="5">
    <location>
        <position position="367"/>
    </location>
</feature>
<feature type="modified residue" description="Phosphoserine" evidence="5">
    <location>
        <position position="369"/>
    </location>
</feature>
<feature type="modified residue" description="Phosphothreonine" evidence="5">
    <location>
        <position position="370"/>
    </location>
</feature>
<feature type="cross-link" description="Glycyl lysine isopeptide (Lys-Gly) (interchain with G-Cter in ubiquitin)" evidence="6">
    <location>
        <position position="228"/>
    </location>
</feature>
<feature type="sequence conflict" description="In Ref. 1; AAA72430." evidence="4" ref="1">
    <original>M</original>
    <variation>I</variation>
    <location>
        <position position="253"/>
    </location>
</feature>
<sequence>MTEFELPPKYITAANDLRSDTFTTPTAEMMEAALEASIGDAVYGEDVDTVRLEQTVARMAGKEAGLFCVSGTLSNQIAIRTHLMQPPYSILCDYRAHVYTHEAAGLAILSQAMVVPVVPSNGDYLTLEDIKSHYVPDDGDIHGAPTRLISLENTLHGIVYPLEELVRIKAWCMENGLKLHCDGARIWNAAAQSGVPLKQYGEIFDSISICLSKSMGAPIGSVLVGNLKFVKKATHFRKQQGGGIRQSGMMARMALVNINNDWKSQLLYSHSLAHELAEYCEAKGIPLESPADTNFVFINLKAARMDPDVLVKKGLKYNVKLMGGRVSFHYQVTRDTLEKVKLAISEAFDYAKEHPFDCNGPTQIYRSESTEVDVDGNAIREIKTYKY</sequence>
<keyword id="KW-1017">Isopeptide bond</keyword>
<keyword id="KW-0456">Lyase</keyword>
<keyword id="KW-0597">Phosphoprotein</keyword>
<keyword id="KW-0663">Pyridoxal phosphate</keyword>
<keyword id="KW-1185">Reference proteome</keyword>
<keyword id="KW-0832">Ubl conjugation</keyword>
<comment type="function">
    <text>Catalyzes the cleavage of L-allo-threonine and L-threonine to glycine and acetaldehyde.</text>
</comment>
<comment type="catalytic activity">
    <reaction evidence="3">
        <text>L-threonine = acetaldehyde + glycine</text>
        <dbReference type="Rhea" id="RHEA:19625"/>
        <dbReference type="ChEBI" id="CHEBI:15343"/>
        <dbReference type="ChEBI" id="CHEBI:57305"/>
        <dbReference type="ChEBI" id="CHEBI:57926"/>
        <dbReference type="EC" id="4.1.2.48"/>
    </reaction>
</comment>
<comment type="catalytic activity">
    <reaction evidence="3">
        <text>L-allo-threonine = acetaldehyde + glycine</text>
        <dbReference type="Rhea" id="RHEA:26209"/>
        <dbReference type="ChEBI" id="CHEBI:15343"/>
        <dbReference type="ChEBI" id="CHEBI:57305"/>
        <dbReference type="ChEBI" id="CHEBI:58585"/>
        <dbReference type="EC" id="4.1.2.48"/>
    </reaction>
</comment>
<comment type="cofactor">
    <cofactor>
        <name>pyridoxal 5'-phosphate</name>
        <dbReference type="ChEBI" id="CHEBI:597326"/>
    </cofactor>
</comment>
<comment type="pathway">
    <text>Amino-acid biosynthesis; glycine biosynthesis; glycine from L-allo-threonine: step 1/1.</text>
</comment>
<comment type="pathway">
    <text>Amino-acid degradation; L-threonine degradation via aldolase pathway; acetaldehyde and glycine from L-threonine: step 1/1.</text>
</comment>
<comment type="subunit">
    <text>Homotetramer.</text>
</comment>
<comment type="miscellaneous">
    <text evidence="2">Present with 106000 molecules/cell in log phase SD medium.</text>
</comment>
<comment type="similarity">
    <text evidence="4">Belongs to the threonine aldolase family.</text>
</comment>
<gene>
    <name type="primary">GLY1</name>
    <name type="ordered locus">YEL046C</name>
    <name type="ORF">SYGP-ORF34</name>
</gene>
<protein>
    <recommendedName>
        <fullName>Low specificity L-threonine aldolase</fullName>
        <shortName>Low specificity L-TA</shortName>
        <shortName>TA</shortName>
        <ecNumber>4.1.2.48</ecNumber>
    </recommendedName>
</protein>
<dbReference type="EC" id="4.1.2.48"/>
<dbReference type="EMBL" id="L28739">
    <property type="protein sequence ID" value="AAA72430.1"/>
    <property type="molecule type" value="Genomic_DNA"/>
</dbReference>
<dbReference type="EMBL" id="U18779">
    <property type="protein sequence ID" value="AAB64996.1"/>
    <property type="molecule type" value="Genomic_DNA"/>
</dbReference>
<dbReference type="EMBL" id="BK006939">
    <property type="protein sequence ID" value="DAA07608.1"/>
    <property type="molecule type" value="Genomic_DNA"/>
</dbReference>
<dbReference type="PIR" id="S30831">
    <property type="entry name" value="S30831"/>
</dbReference>
<dbReference type="RefSeq" id="NP_010868.1">
    <property type="nucleotide sequence ID" value="NM_001178861.1"/>
</dbReference>
<dbReference type="SMR" id="P37303"/>
<dbReference type="BioGRID" id="36684">
    <property type="interactions" value="63"/>
</dbReference>
<dbReference type="DIP" id="DIP-4287N"/>
<dbReference type="FunCoup" id="P37303">
    <property type="interactions" value="1271"/>
</dbReference>
<dbReference type="IntAct" id="P37303">
    <property type="interactions" value="18"/>
</dbReference>
<dbReference type="STRING" id="4932.YEL046C"/>
<dbReference type="iPTMnet" id="P37303"/>
<dbReference type="PaxDb" id="4932-YEL046C"/>
<dbReference type="PeptideAtlas" id="P37303"/>
<dbReference type="EnsemblFungi" id="YEL046C_mRNA">
    <property type="protein sequence ID" value="YEL046C"/>
    <property type="gene ID" value="YEL046C"/>
</dbReference>
<dbReference type="GeneID" id="856665"/>
<dbReference type="KEGG" id="sce:YEL046C"/>
<dbReference type="AGR" id="SGD:S000000772"/>
<dbReference type="SGD" id="S000000772">
    <property type="gene designation" value="GLY1"/>
</dbReference>
<dbReference type="VEuPathDB" id="FungiDB:YEL046C"/>
<dbReference type="eggNOG" id="KOG1368">
    <property type="taxonomic scope" value="Eukaryota"/>
</dbReference>
<dbReference type="GeneTree" id="ENSGT00390000014681"/>
<dbReference type="HOGENOM" id="CLU_029381_1_0_1"/>
<dbReference type="InParanoid" id="P37303"/>
<dbReference type="OMA" id="LVRIKAW"/>
<dbReference type="OrthoDB" id="10261951at2759"/>
<dbReference type="BioCyc" id="MetaCyc:YEL046C-MONOMER"/>
<dbReference type="BioCyc" id="YEAST:YEL046C-MONOMER"/>
<dbReference type="BRENDA" id="4.1.2.48">
    <property type="organism ID" value="984"/>
</dbReference>
<dbReference type="SABIO-RK" id="P37303"/>
<dbReference type="UniPathway" id="UPA00044">
    <property type="reaction ID" value="UER00429"/>
</dbReference>
<dbReference type="UniPathway" id="UPA00288">
    <property type="reaction ID" value="UER00427"/>
</dbReference>
<dbReference type="BioGRID-ORCS" id="856665">
    <property type="hits" value="10 hits in 10 CRISPR screens"/>
</dbReference>
<dbReference type="PRO" id="PR:P37303"/>
<dbReference type="Proteomes" id="UP000002311">
    <property type="component" value="Chromosome V"/>
</dbReference>
<dbReference type="RNAct" id="P37303">
    <property type="molecule type" value="protein"/>
</dbReference>
<dbReference type="GO" id="GO:0005829">
    <property type="term" value="C:cytosol"/>
    <property type="evidence" value="ECO:0000314"/>
    <property type="project" value="SGD"/>
</dbReference>
<dbReference type="GO" id="GO:0008732">
    <property type="term" value="F:L-allo-threonine aldolase activity"/>
    <property type="evidence" value="ECO:0000314"/>
    <property type="project" value="SGD"/>
</dbReference>
<dbReference type="GO" id="GO:0004793">
    <property type="term" value="F:threonine aldolase activity"/>
    <property type="evidence" value="ECO:0000314"/>
    <property type="project" value="SGD"/>
</dbReference>
<dbReference type="GO" id="GO:0006545">
    <property type="term" value="P:glycine biosynthetic process"/>
    <property type="evidence" value="ECO:0000314"/>
    <property type="project" value="SGD"/>
</dbReference>
<dbReference type="GO" id="GO:0006567">
    <property type="term" value="P:threonine catabolic process"/>
    <property type="evidence" value="ECO:0000314"/>
    <property type="project" value="SGD"/>
</dbReference>
<dbReference type="CDD" id="cd06502">
    <property type="entry name" value="TA_like"/>
    <property type="match status" value="1"/>
</dbReference>
<dbReference type="FunFam" id="3.40.640.10:FF:000030">
    <property type="entry name" value="Low-specificity L-threonine aldolase"/>
    <property type="match status" value="1"/>
</dbReference>
<dbReference type="Gene3D" id="3.90.1150.10">
    <property type="entry name" value="Aspartate Aminotransferase, domain 1"/>
    <property type="match status" value="1"/>
</dbReference>
<dbReference type="Gene3D" id="3.40.640.10">
    <property type="entry name" value="Type I PLP-dependent aspartate aminotransferase-like (Major domain)"/>
    <property type="match status" value="1"/>
</dbReference>
<dbReference type="InterPro" id="IPR001597">
    <property type="entry name" value="ArAA_b-elim_lyase/Thr_aldolase"/>
</dbReference>
<dbReference type="InterPro" id="IPR023603">
    <property type="entry name" value="Low_specificity_L-TA-like"/>
</dbReference>
<dbReference type="InterPro" id="IPR015424">
    <property type="entry name" value="PyrdxlP-dep_Trfase"/>
</dbReference>
<dbReference type="InterPro" id="IPR015421">
    <property type="entry name" value="PyrdxlP-dep_Trfase_major"/>
</dbReference>
<dbReference type="InterPro" id="IPR015422">
    <property type="entry name" value="PyrdxlP-dep_Trfase_small"/>
</dbReference>
<dbReference type="NCBIfam" id="NF041359">
    <property type="entry name" value="GntG_guanitoxin"/>
    <property type="match status" value="1"/>
</dbReference>
<dbReference type="PANTHER" id="PTHR48097:SF9">
    <property type="entry name" value="L-THREONINE ALDOLASE"/>
    <property type="match status" value="1"/>
</dbReference>
<dbReference type="PANTHER" id="PTHR48097">
    <property type="entry name" value="L-THREONINE ALDOLASE-RELATED"/>
    <property type="match status" value="1"/>
</dbReference>
<dbReference type="Pfam" id="PF01212">
    <property type="entry name" value="Beta_elim_lyase"/>
    <property type="match status" value="1"/>
</dbReference>
<dbReference type="PIRSF" id="PIRSF017617">
    <property type="entry name" value="Thr_aldolase"/>
    <property type="match status" value="1"/>
</dbReference>
<dbReference type="SUPFAM" id="SSF53383">
    <property type="entry name" value="PLP-dependent transferases"/>
    <property type="match status" value="1"/>
</dbReference>